<sequence>MSIADIKKTFEQKSARSIESFKSELQKIRTGRAHPGILDQVHVEYYGSMVSISQVANVSLLDARTISVQPWEKGMGPKIEKAIRESDLGLNPSSQGELLRVPMPALNEERRRDLTKVVRGAGEDARIAVRNLRRDANDQAKKLLKDKAISEDDERRSLDEVQKLTDRVIAEIDRLVQSKEAEILAV</sequence>
<feature type="chain" id="PRO_1000003196" description="Ribosome-recycling factor">
    <location>
        <begin position="1"/>
        <end position="186"/>
    </location>
</feature>
<keyword id="KW-0963">Cytoplasm</keyword>
<keyword id="KW-0648">Protein biosynthesis</keyword>
<keyword id="KW-1185">Reference proteome</keyword>
<proteinExistence type="inferred from homology"/>
<gene>
    <name evidence="1" type="primary">frr</name>
    <name type="ordered locus">Mpe_A1976</name>
</gene>
<comment type="function">
    <text evidence="1">Responsible for the release of ribosomes from messenger RNA at the termination of protein biosynthesis. May increase the efficiency of translation by recycling ribosomes from one round of translation to another.</text>
</comment>
<comment type="subcellular location">
    <subcellularLocation>
        <location evidence="1">Cytoplasm</location>
    </subcellularLocation>
</comment>
<comment type="similarity">
    <text evidence="1">Belongs to the RRF family.</text>
</comment>
<accession>A2SH95</accession>
<organism>
    <name type="scientific">Methylibium petroleiphilum (strain ATCC BAA-1232 / LMG 22953 / PM1)</name>
    <dbReference type="NCBI Taxonomy" id="420662"/>
    <lineage>
        <taxon>Bacteria</taxon>
        <taxon>Pseudomonadati</taxon>
        <taxon>Pseudomonadota</taxon>
        <taxon>Betaproteobacteria</taxon>
        <taxon>Burkholderiales</taxon>
        <taxon>Sphaerotilaceae</taxon>
        <taxon>Methylibium</taxon>
    </lineage>
</organism>
<protein>
    <recommendedName>
        <fullName evidence="1">Ribosome-recycling factor</fullName>
        <shortName evidence="1">RRF</shortName>
    </recommendedName>
    <alternativeName>
        <fullName evidence="1">Ribosome-releasing factor</fullName>
    </alternativeName>
</protein>
<name>RRF_METPP</name>
<reference key="1">
    <citation type="journal article" date="2007" name="J. Bacteriol.">
        <title>Whole-genome analysis of the methyl tert-butyl ether-degrading beta-proteobacterium Methylibium petroleiphilum PM1.</title>
        <authorList>
            <person name="Kane S.R."/>
            <person name="Chakicherla A.Y."/>
            <person name="Chain P.S.G."/>
            <person name="Schmidt R."/>
            <person name="Shin M.W."/>
            <person name="Legler T.C."/>
            <person name="Scow K.M."/>
            <person name="Larimer F.W."/>
            <person name="Lucas S.M."/>
            <person name="Richardson P.M."/>
            <person name="Hristova K.R."/>
        </authorList>
    </citation>
    <scope>NUCLEOTIDE SEQUENCE [LARGE SCALE GENOMIC DNA]</scope>
    <source>
        <strain>ATCC BAA-1232 / LMG 22953 / PM1</strain>
    </source>
</reference>
<dbReference type="EMBL" id="CP000555">
    <property type="protein sequence ID" value="ABM94934.1"/>
    <property type="molecule type" value="Genomic_DNA"/>
</dbReference>
<dbReference type="RefSeq" id="WP_011829571.1">
    <property type="nucleotide sequence ID" value="NC_008825.1"/>
</dbReference>
<dbReference type="SMR" id="A2SH95"/>
<dbReference type="STRING" id="420662.Mpe_A1976"/>
<dbReference type="KEGG" id="mpt:Mpe_A1976"/>
<dbReference type="eggNOG" id="COG0233">
    <property type="taxonomic scope" value="Bacteria"/>
</dbReference>
<dbReference type="HOGENOM" id="CLU_073981_2_0_4"/>
<dbReference type="Proteomes" id="UP000000366">
    <property type="component" value="Chromosome"/>
</dbReference>
<dbReference type="GO" id="GO:0005829">
    <property type="term" value="C:cytosol"/>
    <property type="evidence" value="ECO:0007669"/>
    <property type="project" value="GOC"/>
</dbReference>
<dbReference type="GO" id="GO:0043023">
    <property type="term" value="F:ribosomal large subunit binding"/>
    <property type="evidence" value="ECO:0007669"/>
    <property type="project" value="TreeGrafter"/>
</dbReference>
<dbReference type="GO" id="GO:0002184">
    <property type="term" value="P:cytoplasmic translational termination"/>
    <property type="evidence" value="ECO:0007669"/>
    <property type="project" value="TreeGrafter"/>
</dbReference>
<dbReference type="CDD" id="cd00520">
    <property type="entry name" value="RRF"/>
    <property type="match status" value="1"/>
</dbReference>
<dbReference type="FunFam" id="1.10.132.20:FF:000001">
    <property type="entry name" value="Ribosome-recycling factor"/>
    <property type="match status" value="1"/>
</dbReference>
<dbReference type="FunFam" id="3.30.1360.40:FF:000001">
    <property type="entry name" value="Ribosome-recycling factor"/>
    <property type="match status" value="1"/>
</dbReference>
<dbReference type="Gene3D" id="3.30.1360.40">
    <property type="match status" value="1"/>
</dbReference>
<dbReference type="Gene3D" id="1.10.132.20">
    <property type="entry name" value="Ribosome-recycling factor"/>
    <property type="match status" value="1"/>
</dbReference>
<dbReference type="HAMAP" id="MF_00040">
    <property type="entry name" value="RRF"/>
    <property type="match status" value="1"/>
</dbReference>
<dbReference type="InterPro" id="IPR002661">
    <property type="entry name" value="Ribosome_recyc_fac"/>
</dbReference>
<dbReference type="InterPro" id="IPR023584">
    <property type="entry name" value="Ribosome_recyc_fac_dom"/>
</dbReference>
<dbReference type="InterPro" id="IPR036191">
    <property type="entry name" value="RRF_sf"/>
</dbReference>
<dbReference type="NCBIfam" id="TIGR00496">
    <property type="entry name" value="frr"/>
    <property type="match status" value="1"/>
</dbReference>
<dbReference type="PANTHER" id="PTHR20982:SF3">
    <property type="entry name" value="MITOCHONDRIAL RIBOSOME RECYCLING FACTOR PSEUDO 1"/>
    <property type="match status" value="1"/>
</dbReference>
<dbReference type="PANTHER" id="PTHR20982">
    <property type="entry name" value="RIBOSOME RECYCLING FACTOR"/>
    <property type="match status" value="1"/>
</dbReference>
<dbReference type="Pfam" id="PF01765">
    <property type="entry name" value="RRF"/>
    <property type="match status" value="1"/>
</dbReference>
<dbReference type="SUPFAM" id="SSF55194">
    <property type="entry name" value="Ribosome recycling factor, RRF"/>
    <property type="match status" value="1"/>
</dbReference>
<evidence type="ECO:0000255" key="1">
    <source>
        <dbReference type="HAMAP-Rule" id="MF_00040"/>
    </source>
</evidence>